<proteinExistence type="inferred from homology"/>
<sequence>MENKRAIIAVVLSFIVLVGWGYLSEYMGWTPKSVPATEQKTAASAPAPSVVTSAPEAVTPAPAFSPSTGHEVTVTTPLYKAVLHSGGGVLRQFMLSRYHMGIDRDAAPVNLIESSAIRVAPLGLLVNGQPSWNTGQWAFEGGDLNLADGQTGTLRFVGSVDGLRVVRELEFHADSYLVTEKLHLAPEGDAPRTARVGFTLGTTSLTPGESQYNLTRVAWFADGSFSEKSSTGDLEKGVLIDGSIDWAGVMSNYFLAAVAPKDTRAVLKGKLEGGVYRVAVERPDQMVNPGNSDVIVCNYWFGPKERDLLNAAPNNLGKAIDLGWFGFIARPLVTLLDFFYKYVGNYGTAIILLTILIKLVFWPLSHKSYKSMEQMKKLQPMLAKVREKHADDREKMNEEMMRLYKTYKVNPAGGCLPMLVQIPVFFGLYQALLNAIELRHAPFIAHVPFTDIVWLADLSAKDPFYVTPLVMGATMFLQQKLTPPAGDPTQAKVMMFMPVVFTFLFLNFPSGLVVYWLCNNVLSIAQQWWILRKA</sequence>
<keyword id="KW-0997">Cell inner membrane</keyword>
<keyword id="KW-1003">Cell membrane</keyword>
<keyword id="KW-0143">Chaperone</keyword>
<keyword id="KW-0472">Membrane</keyword>
<keyword id="KW-0653">Protein transport</keyword>
<keyword id="KW-1185">Reference proteome</keyword>
<keyword id="KW-0812">Transmembrane</keyword>
<keyword id="KW-1133">Transmembrane helix</keyword>
<keyword id="KW-0813">Transport</keyword>
<dbReference type="EMBL" id="AE017285">
    <property type="protein sequence ID" value="AAS95557.1"/>
    <property type="molecule type" value="Genomic_DNA"/>
</dbReference>
<dbReference type="RefSeq" id="WP_010938376.1">
    <property type="nucleotide sequence ID" value="NC_002937.3"/>
</dbReference>
<dbReference type="RefSeq" id="YP_010298.1">
    <property type="nucleotide sequence ID" value="NC_002937.3"/>
</dbReference>
<dbReference type="SMR" id="Q72D53"/>
<dbReference type="STRING" id="882.DVU_1077"/>
<dbReference type="PaxDb" id="882-DVU_1077"/>
<dbReference type="EnsemblBacteria" id="AAS95557">
    <property type="protein sequence ID" value="AAS95557"/>
    <property type="gene ID" value="DVU_1077"/>
</dbReference>
<dbReference type="KEGG" id="dvu:DVU_1077"/>
<dbReference type="PATRIC" id="fig|882.5.peg.1015"/>
<dbReference type="eggNOG" id="COG0706">
    <property type="taxonomic scope" value="Bacteria"/>
</dbReference>
<dbReference type="HOGENOM" id="CLU_016535_3_0_7"/>
<dbReference type="OrthoDB" id="9780552at2"/>
<dbReference type="PhylomeDB" id="Q72D53"/>
<dbReference type="Proteomes" id="UP000002194">
    <property type="component" value="Chromosome"/>
</dbReference>
<dbReference type="GO" id="GO:0005886">
    <property type="term" value="C:plasma membrane"/>
    <property type="evidence" value="ECO:0007669"/>
    <property type="project" value="UniProtKB-SubCell"/>
</dbReference>
<dbReference type="GO" id="GO:0032977">
    <property type="term" value="F:membrane insertase activity"/>
    <property type="evidence" value="ECO:0007669"/>
    <property type="project" value="InterPro"/>
</dbReference>
<dbReference type="GO" id="GO:0051205">
    <property type="term" value="P:protein insertion into membrane"/>
    <property type="evidence" value="ECO:0007669"/>
    <property type="project" value="TreeGrafter"/>
</dbReference>
<dbReference type="GO" id="GO:0015031">
    <property type="term" value="P:protein transport"/>
    <property type="evidence" value="ECO:0007669"/>
    <property type="project" value="UniProtKB-KW"/>
</dbReference>
<dbReference type="CDD" id="cd20070">
    <property type="entry name" value="5TM_YidC_Alb3"/>
    <property type="match status" value="1"/>
</dbReference>
<dbReference type="CDD" id="cd19961">
    <property type="entry name" value="EcYidC-like_peri"/>
    <property type="match status" value="1"/>
</dbReference>
<dbReference type="Gene3D" id="2.70.98.90">
    <property type="match status" value="1"/>
</dbReference>
<dbReference type="HAMAP" id="MF_01810">
    <property type="entry name" value="YidC_type1"/>
    <property type="match status" value="1"/>
</dbReference>
<dbReference type="InterPro" id="IPR019998">
    <property type="entry name" value="Membr_insert_YidC"/>
</dbReference>
<dbReference type="InterPro" id="IPR028053">
    <property type="entry name" value="Membr_insert_YidC_N"/>
</dbReference>
<dbReference type="InterPro" id="IPR001708">
    <property type="entry name" value="YidC/ALB3/OXA1/COX18"/>
</dbReference>
<dbReference type="InterPro" id="IPR028055">
    <property type="entry name" value="YidC/Oxa/ALB_C"/>
</dbReference>
<dbReference type="InterPro" id="IPR047196">
    <property type="entry name" value="YidC_ALB_C"/>
</dbReference>
<dbReference type="InterPro" id="IPR038221">
    <property type="entry name" value="YidC_periplasmic_sf"/>
</dbReference>
<dbReference type="NCBIfam" id="TIGR03593">
    <property type="entry name" value="yidC_nterm"/>
    <property type="match status" value="1"/>
</dbReference>
<dbReference type="NCBIfam" id="TIGR03592">
    <property type="entry name" value="yidC_oxa1_cterm"/>
    <property type="match status" value="1"/>
</dbReference>
<dbReference type="PANTHER" id="PTHR12428:SF65">
    <property type="entry name" value="CYTOCHROME C OXIDASE ASSEMBLY PROTEIN COX18, MITOCHONDRIAL"/>
    <property type="match status" value="1"/>
</dbReference>
<dbReference type="PANTHER" id="PTHR12428">
    <property type="entry name" value="OXA1"/>
    <property type="match status" value="1"/>
</dbReference>
<dbReference type="Pfam" id="PF02096">
    <property type="entry name" value="60KD_IMP"/>
    <property type="match status" value="1"/>
</dbReference>
<dbReference type="Pfam" id="PF14849">
    <property type="entry name" value="YidC_periplas"/>
    <property type="match status" value="1"/>
</dbReference>
<dbReference type="PRINTS" id="PR00701">
    <property type="entry name" value="60KDINNERMP"/>
</dbReference>
<dbReference type="PRINTS" id="PR01900">
    <property type="entry name" value="YIDCPROTEIN"/>
</dbReference>
<protein>
    <recommendedName>
        <fullName evidence="1">Membrane protein insertase YidC</fullName>
    </recommendedName>
    <alternativeName>
        <fullName evidence="1">Foldase YidC</fullName>
    </alternativeName>
    <alternativeName>
        <fullName evidence="1">Membrane integrase YidC</fullName>
    </alternativeName>
    <alternativeName>
        <fullName evidence="1">Membrane protein YidC</fullName>
    </alternativeName>
</protein>
<name>YIDC_NITV2</name>
<accession>Q72D53</accession>
<evidence type="ECO:0000255" key="1">
    <source>
        <dbReference type="HAMAP-Rule" id="MF_01810"/>
    </source>
</evidence>
<reference key="1">
    <citation type="journal article" date="2004" name="Nat. Biotechnol.">
        <title>The genome sequence of the anaerobic, sulfate-reducing bacterium Desulfovibrio vulgaris Hildenborough.</title>
        <authorList>
            <person name="Heidelberg J.F."/>
            <person name="Seshadri R."/>
            <person name="Haveman S.A."/>
            <person name="Hemme C.L."/>
            <person name="Paulsen I.T."/>
            <person name="Kolonay J.F."/>
            <person name="Eisen J.A."/>
            <person name="Ward N.L."/>
            <person name="Methe B.A."/>
            <person name="Brinkac L.M."/>
            <person name="Daugherty S.C."/>
            <person name="DeBoy R.T."/>
            <person name="Dodson R.J."/>
            <person name="Durkin A.S."/>
            <person name="Madupu R."/>
            <person name="Nelson W.C."/>
            <person name="Sullivan S.A."/>
            <person name="Fouts D.E."/>
            <person name="Haft D.H."/>
            <person name="Selengut J."/>
            <person name="Peterson J.D."/>
            <person name="Davidsen T.M."/>
            <person name="Zafar N."/>
            <person name="Zhou L."/>
            <person name="Radune D."/>
            <person name="Dimitrov G."/>
            <person name="Hance M."/>
            <person name="Tran K."/>
            <person name="Khouri H.M."/>
            <person name="Gill J."/>
            <person name="Utterback T.R."/>
            <person name="Feldblyum T.V."/>
            <person name="Wall J.D."/>
            <person name="Voordouw G."/>
            <person name="Fraser C.M."/>
        </authorList>
    </citation>
    <scope>NUCLEOTIDE SEQUENCE [LARGE SCALE GENOMIC DNA]</scope>
    <source>
        <strain>ATCC 29579 / DSM 644 / CCUG 34227 / NCIMB 8303 / VKM B-1760 / Hildenborough</strain>
    </source>
</reference>
<feature type="chain" id="PRO_1000215967" description="Membrane protein insertase YidC">
    <location>
        <begin position="1"/>
        <end position="534"/>
    </location>
</feature>
<feature type="transmembrane region" description="Helical" evidence="1">
    <location>
        <begin position="7"/>
        <end position="27"/>
    </location>
</feature>
<feature type="transmembrane region" description="Helical" evidence="1">
    <location>
        <begin position="319"/>
        <end position="339"/>
    </location>
</feature>
<feature type="transmembrane region" description="Helical" evidence="1">
    <location>
        <begin position="342"/>
        <end position="362"/>
    </location>
</feature>
<feature type="transmembrane region" description="Helical" evidence="1">
    <location>
        <begin position="413"/>
        <end position="433"/>
    </location>
</feature>
<feature type="transmembrane region" description="Helical" evidence="1">
    <location>
        <begin position="493"/>
        <end position="513"/>
    </location>
</feature>
<comment type="function">
    <text evidence="1">Required for the insertion and/or proper folding and/or complex formation of integral membrane proteins into the membrane. Involved in integration of membrane proteins that insert both dependently and independently of the Sec translocase complex, as well as at least some lipoproteins. Aids folding of multispanning membrane proteins.</text>
</comment>
<comment type="subunit">
    <text evidence="1">Interacts with the Sec translocase complex via SecD. Specifically interacts with transmembrane segments of nascent integral membrane proteins during membrane integration.</text>
</comment>
<comment type="subcellular location">
    <subcellularLocation>
        <location evidence="1">Cell inner membrane</location>
        <topology evidence="1">Multi-pass membrane protein</topology>
    </subcellularLocation>
</comment>
<comment type="similarity">
    <text evidence="1">Belongs to the OXA1/ALB3/YidC family. Type 1 subfamily.</text>
</comment>
<organism>
    <name type="scientific">Nitratidesulfovibrio vulgaris (strain ATCC 29579 / DSM 644 / CCUG 34227 / NCIMB 8303 / VKM B-1760 / Hildenborough)</name>
    <name type="common">Desulfovibrio vulgaris</name>
    <dbReference type="NCBI Taxonomy" id="882"/>
    <lineage>
        <taxon>Bacteria</taxon>
        <taxon>Pseudomonadati</taxon>
        <taxon>Thermodesulfobacteriota</taxon>
        <taxon>Desulfovibrionia</taxon>
        <taxon>Desulfovibrionales</taxon>
        <taxon>Desulfovibrionaceae</taxon>
        <taxon>Nitratidesulfovibrio</taxon>
    </lineage>
</organism>
<gene>
    <name evidence="1" type="primary">yidC</name>
    <name type="ordered locus">DVU_1077</name>
</gene>